<reference key="1">
    <citation type="journal article" date="2007" name="PLoS ONE">
        <title>Molecular correlates of host specialization in Staphylococcus aureus.</title>
        <authorList>
            <person name="Herron-Olson L."/>
            <person name="Fitzgerald J.R."/>
            <person name="Musser J.M."/>
            <person name="Kapur V."/>
        </authorList>
    </citation>
    <scope>NUCLEOTIDE SEQUENCE [LARGE SCALE GENOMIC DNA]</scope>
    <source>
        <strain>bovine RF122 / ET3-1</strain>
    </source>
</reference>
<gene>
    <name evidence="1" type="primary">apt</name>
    <name type="ordered locus">SAB1504c</name>
</gene>
<organism>
    <name type="scientific">Staphylococcus aureus (strain bovine RF122 / ET3-1)</name>
    <dbReference type="NCBI Taxonomy" id="273036"/>
    <lineage>
        <taxon>Bacteria</taxon>
        <taxon>Bacillati</taxon>
        <taxon>Bacillota</taxon>
        <taxon>Bacilli</taxon>
        <taxon>Bacillales</taxon>
        <taxon>Staphylococcaceae</taxon>
        <taxon>Staphylococcus</taxon>
    </lineage>
</organism>
<sequence>MDLKQYVSEVQDWPKPGVSFKDITTIMDNGEAYGYATNKIVEYAKDRDVDIVVGPEARGFIIGCPVAYSMGIGFAPVRKEGKLPREVIRYEYDLEYGTNVLTMHKDAIKPGQRVLITDDLLATGGTIEAAIKLVEKLGGIVVGIAFIIELKYLNGIEKIKDYDVMSLISYDE</sequence>
<dbReference type="EC" id="2.4.2.7" evidence="1"/>
<dbReference type="EMBL" id="AJ938182">
    <property type="protein sequence ID" value="CAI81193.1"/>
    <property type="molecule type" value="Genomic_DNA"/>
</dbReference>
<dbReference type="RefSeq" id="WP_000364543.1">
    <property type="nucleotide sequence ID" value="NC_007622.1"/>
</dbReference>
<dbReference type="SMR" id="Q2YT95"/>
<dbReference type="KEGG" id="sab:SAB1504c"/>
<dbReference type="HOGENOM" id="CLU_063339_3_0_9"/>
<dbReference type="UniPathway" id="UPA00588">
    <property type="reaction ID" value="UER00646"/>
</dbReference>
<dbReference type="GO" id="GO:0005737">
    <property type="term" value="C:cytoplasm"/>
    <property type="evidence" value="ECO:0007669"/>
    <property type="project" value="UniProtKB-SubCell"/>
</dbReference>
<dbReference type="GO" id="GO:0002055">
    <property type="term" value="F:adenine binding"/>
    <property type="evidence" value="ECO:0007669"/>
    <property type="project" value="TreeGrafter"/>
</dbReference>
<dbReference type="GO" id="GO:0003999">
    <property type="term" value="F:adenine phosphoribosyltransferase activity"/>
    <property type="evidence" value="ECO:0007669"/>
    <property type="project" value="UniProtKB-UniRule"/>
</dbReference>
<dbReference type="GO" id="GO:0016208">
    <property type="term" value="F:AMP binding"/>
    <property type="evidence" value="ECO:0007669"/>
    <property type="project" value="TreeGrafter"/>
</dbReference>
<dbReference type="GO" id="GO:0006168">
    <property type="term" value="P:adenine salvage"/>
    <property type="evidence" value="ECO:0007669"/>
    <property type="project" value="InterPro"/>
</dbReference>
<dbReference type="GO" id="GO:0044209">
    <property type="term" value="P:AMP salvage"/>
    <property type="evidence" value="ECO:0007669"/>
    <property type="project" value="UniProtKB-UniRule"/>
</dbReference>
<dbReference type="GO" id="GO:0006166">
    <property type="term" value="P:purine ribonucleoside salvage"/>
    <property type="evidence" value="ECO:0007669"/>
    <property type="project" value="UniProtKB-KW"/>
</dbReference>
<dbReference type="CDD" id="cd06223">
    <property type="entry name" value="PRTases_typeI"/>
    <property type="match status" value="1"/>
</dbReference>
<dbReference type="FunFam" id="3.40.50.2020:FF:000004">
    <property type="entry name" value="Adenine phosphoribosyltransferase"/>
    <property type="match status" value="1"/>
</dbReference>
<dbReference type="Gene3D" id="3.40.50.2020">
    <property type="match status" value="1"/>
</dbReference>
<dbReference type="HAMAP" id="MF_00004">
    <property type="entry name" value="Aden_phosphoribosyltr"/>
    <property type="match status" value="1"/>
</dbReference>
<dbReference type="InterPro" id="IPR005764">
    <property type="entry name" value="Ade_phspho_trans"/>
</dbReference>
<dbReference type="InterPro" id="IPR000836">
    <property type="entry name" value="PRibTrfase_dom"/>
</dbReference>
<dbReference type="InterPro" id="IPR029057">
    <property type="entry name" value="PRTase-like"/>
</dbReference>
<dbReference type="InterPro" id="IPR050054">
    <property type="entry name" value="UPRTase/APRTase"/>
</dbReference>
<dbReference type="NCBIfam" id="TIGR01090">
    <property type="entry name" value="apt"/>
    <property type="match status" value="1"/>
</dbReference>
<dbReference type="NCBIfam" id="NF002633">
    <property type="entry name" value="PRK02304.1-2"/>
    <property type="match status" value="1"/>
</dbReference>
<dbReference type="NCBIfam" id="NF002634">
    <property type="entry name" value="PRK02304.1-3"/>
    <property type="match status" value="1"/>
</dbReference>
<dbReference type="NCBIfam" id="NF002636">
    <property type="entry name" value="PRK02304.1-5"/>
    <property type="match status" value="1"/>
</dbReference>
<dbReference type="PANTHER" id="PTHR32315">
    <property type="entry name" value="ADENINE PHOSPHORIBOSYLTRANSFERASE"/>
    <property type="match status" value="1"/>
</dbReference>
<dbReference type="PANTHER" id="PTHR32315:SF3">
    <property type="entry name" value="ADENINE PHOSPHORIBOSYLTRANSFERASE"/>
    <property type="match status" value="1"/>
</dbReference>
<dbReference type="Pfam" id="PF00156">
    <property type="entry name" value="Pribosyltran"/>
    <property type="match status" value="1"/>
</dbReference>
<dbReference type="SUPFAM" id="SSF53271">
    <property type="entry name" value="PRTase-like"/>
    <property type="match status" value="1"/>
</dbReference>
<name>APT_STAAB</name>
<evidence type="ECO:0000255" key="1">
    <source>
        <dbReference type="HAMAP-Rule" id="MF_00004"/>
    </source>
</evidence>
<protein>
    <recommendedName>
        <fullName evidence="1">Adenine phosphoribosyltransferase</fullName>
        <shortName evidence="1">APRT</shortName>
        <ecNumber evidence="1">2.4.2.7</ecNumber>
    </recommendedName>
</protein>
<proteinExistence type="inferred from homology"/>
<feature type="chain" id="PRO_1000000348" description="Adenine phosphoribosyltransferase">
    <location>
        <begin position="1"/>
        <end position="172"/>
    </location>
</feature>
<accession>Q2YT95</accession>
<keyword id="KW-0963">Cytoplasm</keyword>
<keyword id="KW-0328">Glycosyltransferase</keyword>
<keyword id="KW-0660">Purine salvage</keyword>
<keyword id="KW-0808">Transferase</keyword>
<comment type="function">
    <text evidence="1">Catalyzes a salvage reaction resulting in the formation of AMP, that is energically less costly than de novo synthesis.</text>
</comment>
<comment type="catalytic activity">
    <reaction evidence="1">
        <text>AMP + diphosphate = 5-phospho-alpha-D-ribose 1-diphosphate + adenine</text>
        <dbReference type="Rhea" id="RHEA:16609"/>
        <dbReference type="ChEBI" id="CHEBI:16708"/>
        <dbReference type="ChEBI" id="CHEBI:33019"/>
        <dbReference type="ChEBI" id="CHEBI:58017"/>
        <dbReference type="ChEBI" id="CHEBI:456215"/>
        <dbReference type="EC" id="2.4.2.7"/>
    </reaction>
</comment>
<comment type="pathway">
    <text evidence="1">Purine metabolism; AMP biosynthesis via salvage pathway; AMP from adenine: step 1/1.</text>
</comment>
<comment type="subunit">
    <text evidence="1">Homodimer.</text>
</comment>
<comment type="subcellular location">
    <subcellularLocation>
        <location evidence="1">Cytoplasm</location>
    </subcellularLocation>
</comment>
<comment type="similarity">
    <text evidence="1">Belongs to the purine/pyrimidine phosphoribosyltransferase family.</text>
</comment>